<accession>C1CAM8</accession>
<protein>
    <recommendedName>
        <fullName evidence="1">Large ribosomal subunit protein uL18</fullName>
    </recommendedName>
    <alternativeName>
        <fullName evidence="3">50S ribosomal protein L18</fullName>
    </alternativeName>
</protein>
<organism>
    <name type="scientific">Streptococcus pneumoniae (strain 70585)</name>
    <dbReference type="NCBI Taxonomy" id="488221"/>
    <lineage>
        <taxon>Bacteria</taxon>
        <taxon>Bacillati</taxon>
        <taxon>Bacillota</taxon>
        <taxon>Bacilli</taxon>
        <taxon>Lactobacillales</taxon>
        <taxon>Streptococcaceae</taxon>
        <taxon>Streptococcus</taxon>
    </lineage>
</organism>
<keyword id="KW-0687">Ribonucleoprotein</keyword>
<keyword id="KW-0689">Ribosomal protein</keyword>
<keyword id="KW-0694">RNA-binding</keyword>
<keyword id="KW-0699">rRNA-binding</keyword>
<sequence length="118" mass="12867">MISKPDKNKLRQKRHRRVRGKLSGTADRPRLNVFRSNTGIYAQVIDDVAGVTLASASTLDKEVSKGTKTEQAVAVGKLVAERANAKGISEVVFDRGGYLYHGRVKALADAARENGLKF</sequence>
<comment type="function">
    <text evidence="1">This is one of the proteins that bind and probably mediate the attachment of the 5S RNA into the large ribosomal subunit, where it forms part of the central protuberance.</text>
</comment>
<comment type="subunit">
    <text evidence="1">Part of the 50S ribosomal subunit; part of the 5S rRNA/L5/L18/L25 subcomplex. Contacts the 5S and 23S rRNAs.</text>
</comment>
<comment type="similarity">
    <text evidence="1">Belongs to the universal ribosomal protein uL18 family.</text>
</comment>
<dbReference type="EMBL" id="CP000918">
    <property type="protein sequence ID" value="ACO16846.1"/>
    <property type="molecule type" value="Genomic_DNA"/>
</dbReference>
<dbReference type="RefSeq" id="WP_000624044.1">
    <property type="nucleotide sequence ID" value="NC_012468.1"/>
</dbReference>
<dbReference type="SMR" id="C1CAM8"/>
<dbReference type="GeneID" id="93738973"/>
<dbReference type="KEGG" id="snm:SP70585_0281"/>
<dbReference type="HOGENOM" id="CLU_098841_0_1_9"/>
<dbReference type="Proteomes" id="UP000002211">
    <property type="component" value="Chromosome"/>
</dbReference>
<dbReference type="GO" id="GO:0022625">
    <property type="term" value="C:cytosolic large ribosomal subunit"/>
    <property type="evidence" value="ECO:0007669"/>
    <property type="project" value="TreeGrafter"/>
</dbReference>
<dbReference type="GO" id="GO:0008097">
    <property type="term" value="F:5S rRNA binding"/>
    <property type="evidence" value="ECO:0007669"/>
    <property type="project" value="TreeGrafter"/>
</dbReference>
<dbReference type="GO" id="GO:0003735">
    <property type="term" value="F:structural constituent of ribosome"/>
    <property type="evidence" value="ECO:0007669"/>
    <property type="project" value="InterPro"/>
</dbReference>
<dbReference type="GO" id="GO:0006412">
    <property type="term" value="P:translation"/>
    <property type="evidence" value="ECO:0007669"/>
    <property type="project" value="UniProtKB-UniRule"/>
</dbReference>
<dbReference type="CDD" id="cd00432">
    <property type="entry name" value="Ribosomal_L18_L5e"/>
    <property type="match status" value="1"/>
</dbReference>
<dbReference type="FunFam" id="3.30.420.100:FF:000001">
    <property type="entry name" value="50S ribosomal protein L18"/>
    <property type="match status" value="1"/>
</dbReference>
<dbReference type="Gene3D" id="3.30.420.100">
    <property type="match status" value="1"/>
</dbReference>
<dbReference type="HAMAP" id="MF_01337_B">
    <property type="entry name" value="Ribosomal_uL18_B"/>
    <property type="match status" value="1"/>
</dbReference>
<dbReference type="InterPro" id="IPR004389">
    <property type="entry name" value="Ribosomal_uL18_bac-type"/>
</dbReference>
<dbReference type="InterPro" id="IPR005484">
    <property type="entry name" value="Ribosomal_uL18_bac/euk"/>
</dbReference>
<dbReference type="NCBIfam" id="TIGR00060">
    <property type="entry name" value="L18_bact"/>
    <property type="match status" value="1"/>
</dbReference>
<dbReference type="PANTHER" id="PTHR12899">
    <property type="entry name" value="39S RIBOSOMAL PROTEIN L18, MITOCHONDRIAL"/>
    <property type="match status" value="1"/>
</dbReference>
<dbReference type="PANTHER" id="PTHR12899:SF3">
    <property type="entry name" value="LARGE RIBOSOMAL SUBUNIT PROTEIN UL18M"/>
    <property type="match status" value="1"/>
</dbReference>
<dbReference type="Pfam" id="PF00861">
    <property type="entry name" value="Ribosomal_L18p"/>
    <property type="match status" value="1"/>
</dbReference>
<dbReference type="SUPFAM" id="SSF53137">
    <property type="entry name" value="Translational machinery components"/>
    <property type="match status" value="1"/>
</dbReference>
<name>RL18_STRP7</name>
<feature type="chain" id="PRO_1000166250" description="Large ribosomal subunit protein uL18">
    <location>
        <begin position="1"/>
        <end position="118"/>
    </location>
</feature>
<feature type="region of interest" description="Disordered" evidence="2">
    <location>
        <begin position="1"/>
        <end position="25"/>
    </location>
</feature>
<feature type="compositionally biased region" description="Basic residues" evidence="2">
    <location>
        <begin position="10"/>
        <end position="20"/>
    </location>
</feature>
<proteinExistence type="inferred from homology"/>
<evidence type="ECO:0000255" key="1">
    <source>
        <dbReference type="HAMAP-Rule" id="MF_01337"/>
    </source>
</evidence>
<evidence type="ECO:0000256" key="2">
    <source>
        <dbReference type="SAM" id="MobiDB-lite"/>
    </source>
</evidence>
<evidence type="ECO:0000305" key="3"/>
<reference key="1">
    <citation type="journal article" date="2010" name="Genome Biol.">
        <title>Structure and dynamics of the pan-genome of Streptococcus pneumoniae and closely related species.</title>
        <authorList>
            <person name="Donati C."/>
            <person name="Hiller N.L."/>
            <person name="Tettelin H."/>
            <person name="Muzzi A."/>
            <person name="Croucher N.J."/>
            <person name="Angiuoli S.V."/>
            <person name="Oggioni M."/>
            <person name="Dunning Hotopp J.C."/>
            <person name="Hu F.Z."/>
            <person name="Riley D.R."/>
            <person name="Covacci A."/>
            <person name="Mitchell T.J."/>
            <person name="Bentley S.D."/>
            <person name="Kilian M."/>
            <person name="Ehrlich G.D."/>
            <person name="Rappuoli R."/>
            <person name="Moxon E.R."/>
            <person name="Masignani V."/>
        </authorList>
    </citation>
    <scope>NUCLEOTIDE SEQUENCE [LARGE SCALE GENOMIC DNA]</scope>
    <source>
        <strain>70585</strain>
    </source>
</reference>
<gene>
    <name evidence="1" type="primary">rplR</name>
    <name type="ordered locus">SP70585_0281</name>
</gene>